<proteinExistence type="predicted"/>
<name>YRRD_BACSU</name>
<reference key="1">
    <citation type="journal article" date="1997" name="Nature">
        <title>The complete genome sequence of the Gram-positive bacterium Bacillus subtilis.</title>
        <authorList>
            <person name="Kunst F."/>
            <person name="Ogasawara N."/>
            <person name="Moszer I."/>
            <person name="Albertini A.M."/>
            <person name="Alloni G."/>
            <person name="Azevedo V."/>
            <person name="Bertero M.G."/>
            <person name="Bessieres P."/>
            <person name="Bolotin A."/>
            <person name="Borchert S."/>
            <person name="Borriss R."/>
            <person name="Boursier L."/>
            <person name="Brans A."/>
            <person name="Braun M."/>
            <person name="Brignell S.C."/>
            <person name="Bron S."/>
            <person name="Brouillet S."/>
            <person name="Bruschi C.V."/>
            <person name="Caldwell B."/>
            <person name="Capuano V."/>
            <person name="Carter N.M."/>
            <person name="Choi S.-K."/>
            <person name="Codani J.-J."/>
            <person name="Connerton I.F."/>
            <person name="Cummings N.J."/>
            <person name="Daniel R.A."/>
            <person name="Denizot F."/>
            <person name="Devine K.M."/>
            <person name="Duesterhoeft A."/>
            <person name="Ehrlich S.D."/>
            <person name="Emmerson P.T."/>
            <person name="Entian K.-D."/>
            <person name="Errington J."/>
            <person name="Fabret C."/>
            <person name="Ferrari E."/>
            <person name="Foulger D."/>
            <person name="Fritz C."/>
            <person name="Fujita M."/>
            <person name="Fujita Y."/>
            <person name="Fuma S."/>
            <person name="Galizzi A."/>
            <person name="Galleron N."/>
            <person name="Ghim S.-Y."/>
            <person name="Glaser P."/>
            <person name="Goffeau A."/>
            <person name="Golightly E.J."/>
            <person name="Grandi G."/>
            <person name="Guiseppi G."/>
            <person name="Guy B.J."/>
            <person name="Haga K."/>
            <person name="Haiech J."/>
            <person name="Harwood C.R."/>
            <person name="Henaut A."/>
            <person name="Hilbert H."/>
            <person name="Holsappel S."/>
            <person name="Hosono S."/>
            <person name="Hullo M.-F."/>
            <person name="Itaya M."/>
            <person name="Jones L.-M."/>
            <person name="Joris B."/>
            <person name="Karamata D."/>
            <person name="Kasahara Y."/>
            <person name="Klaerr-Blanchard M."/>
            <person name="Klein C."/>
            <person name="Kobayashi Y."/>
            <person name="Koetter P."/>
            <person name="Koningstein G."/>
            <person name="Krogh S."/>
            <person name="Kumano M."/>
            <person name="Kurita K."/>
            <person name="Lapidus A."/>
            <person name="Lardinois S."/>
            <person name="Lauber J."/>
            <person name="Lazarevic V."/>
            <person name="Lee S.-M."/>
            <person name="Levine A."/>
            <person name="Liu H."/>
            <person name="Masuda S."/>
            <person name="Mauel C."/>
            <person name="Medigue C."/>
            <person name="Medina N."/>
            <person name="Mellado R.P."/>
            <person name="Mizuno M."/>
            <person name="Moestl D."/>
            <person name="Nakai S."/>
            <person name="Noback M."/>
            <person name="Noone D."/>
            <person name="O'Reilly M."/>
            <person name="Ogawa K."/>
            <person name="Ogiwara A."/>
            <person name="Oudega B."/>
            <person name="Park S.-H."/>
            <person name="Parro V."/>
            <person name="Pohl T.M."/>
            <person name="Portetelle D."/>
            <person name="Porwollik S."/>
            <person name="Prescott A.M."/>
            <person name="Presecan E."/>
            <person name="Pujic P."/>
            <person name="Purnelle B."/>
            <person name="Rapoport G."/>
            <person name="Rey M."/>
            <person name="Reynolds S."/>
            <person name="Rieger M."/>
            <person name="Rivolta C."/>
            <person name="Rocha E."/>
            <person name="Roche B."/>
            <person name="Rose M."/>
            <person name="Sadaie Y."/>
            <person name="Sato T."/>
            <person name="Scanlan E."/>
            <person name="Schleich S."/>
            <person name="Schroeter R."/>
            <person name="Scoffone F."/>
            <person name="Sekiguchi J."/>
            <person name="Sekowska A."/>
            <person name="Seror S.J."/>
            <person name="Serror P."/>
            <person name="Shin B.-S."/>
            <person name="Soldo B."/>
            <person name="Sorokin A."/>
            <person name="Tacconi E."/>
            <person name="Takagi T."/>
            <person name="Takahashi H."/>
            <person name="Takemaru K."/>
            <person name="Takeuchi M."/>
            <person name="Tamakoshi A."/>
            <person name="Tanaka T."/>
            <person name="Terpstra P."/>
            <person name="Tognoni A."/>
            <person name="Tosato V."/>
            <person name="Uchiyama S."/>
            <person name="Vandenbol M."/>
            <person name="Vannier F."/>
            <person name="Vassarotti A."/>
            <person name="Viari A."/>
            <person name="Wambutt R."/>
            <person name="Wedler E."/>
            <person name="Wedler H."/>
            <person name="Weitzenegger T."/>
            <person name="Winters P."/>
            <person name="Wipat A."/>
            <person name="Yamamoto H."/>
            <person name="Yamane K."/>
            <person name="Yasumoto K."/>
            <person name="Yata K."/>
            <person name="Yoshida K."/>
            <person name="Yoshikawa H.-F."/>
            <person name="Zumstein E."/>
            <person name="Yoshikawa H."/>
            <person name="Danchin A."/>
        </authorList>
    </citation>
    <scope>NUCLEOTIDE SEQUENCE [LARGE SCALE GENOMIC DNA]</scope>
    <source>
        <strain>168</strain>
    </source>
</reference>
<accession>O34402</accession>
<organism>
    <name type="scientific">Bacillus subtilis (strain 168)</name>
    <dbReference type="NCBI Taxonomy" id="224308"/>
    <lineage>
        <taxon>Bacteria</taxon>
        <taxon>Bacillati</taxon>
        <taxon>Bacillota</taxon>
        <taxon>Bacilli</taxon>
        <taxon>Bacillales</taxon>
        <taxon>Bacillaceae</taxon>
        <taxon>Bacillus</taxon>
    </lineage>
</organism>
<protein>
    <recommendedName>
        <fullName>Uncharacterized protein YrrD</fullName>
    </recommendedName>
</protein>
<dbReference type="EMBL" id="AL009126">
    <property type="protein sequence ID" value="CAB14688.1"/>
    <property type="molecule type" value="Genomic_DNA"/>
</dbReference>
<dbReference type="PIR" id="B69979">
    <property type="entry name" value="B69979"/>
</dbReference>
<dbReference type="RefSeq" id="NP_390624.1">
    <property type="nucleotide sequence ID" value="NC_000964.3"/>
</dbReference>
<dbReference type="RefSeq" id="WP_010886583.1">
    <property type="nucleotide sequence ID" value="NZ_OZ025638.1"/>
</dbReference>
<dbReference type="SMR" id="O34402"/>
<dbReference type="FunCoup" id="O34402">
    <property type="interactions" value="42"/>
</dbReference>
<dbReference type="STRING" id="224308.BSU27470"/>
<dbReference type="PaxDb" id="224308-BSU27470"/>
<dbReference type="EnsemblBacteria" id="CAB14688">
    <property type="protein sequence ID" value="CAB14688"/>
    <property type="gene ID" value="BSU_27470"/>
</dbReference>
<dbReference type="GeneID" id="937552"/>
<dbReference type="KEGG" id="bsu:BSU27470"/>
<dbReference type="PATRIC" id="fig|224308.43.peg.2867"/>
<dbReference type="eggNOG" id="COG3881">
    <property type="taxonomic scope" value="Bacteria"/>
</dbReference>
<dbReference type="InParanoid" id="O34402"/>
<dbReference type="OrthoDB" id="1707618at2"/>
<dbReference type="BioCyc" id="BSUB:BSU27470-MONOMER"/>
<dbReference type="Proteomes" id="UP000001570">
    <property type="component" value="Chromosome"/>
</dbReference>
<dbReference type="InterPro" id="IPR027275">
    <property type="entry name" value="PRC-brl_dom"/>
</dbReference>
<dbReference type="InterPro" id="IPR011033">
    <property type="entry name" value="PRC_barrel-like_sf"/>
</dbReference>
<dbReference type="Pfam" id="PF05239">
    <property type="entry name" value="PRC"/>
    <property type="match status" value="1"/>
</dbReference>
<dbReference type="SUPFAM" id="SSF50346">
    <property type="entry name" value="PRC-barrel domain"/>
    <property type="match status" value="1"/>
</dbReference>
<gene>
    <name type="primary">yrrD</name>
    <name type="ordered locus">BSU27470</name>
</gene>
<sequence length="174" mass="19729">MSLRRKAKPKPVQQKVVDHTLRTCHEVEGFPVYSERTSSYLGTISDICFSLKGDCLGFILAQKRFLHHHHALLRACDISSIFDDRILASVSSEQLLPLPKSCFTYEQMKMKLVKSQEGDILGMLEDVYFCLDRGIIVAYELSDGFFSDLAGSKRQIQRADSLVEVRKDEIVLNG</sequence>
<feature type="chain" id="PRO_0000390397" description="Uncharacterized protein YrrD">
    <location>
        <begin position="1"/>
        <end position="174"/>
    </location>
</feature>
<keyword id="KW-1185">Reference proteome</keyword>